<protein>
    <recommendedName>
        <fullName>Uncharacterized 8.4 kDa protein</fullName>
    </recommendedName>
</protein>
<sequence>MSVRLAPDGTYVYGQPMLAPNGTYVGGGAPRLAPDGTYVGGVPRLAPNGSYVAGRPTLAPDGTYVGGRYHLAPDGTYVGDGSE</sequence>
<feature type="chain" id="PRO_0000165300" description="Uncharacterized 8.4 kDa protein">
    <location>
        <begin position="1"/>
        <end position="83"/>
    </location>
</feature>
<organism>
    <name type="scientific">Escherichia phage 186</name>
    <name type="common">Bacteriophage 186</name>
    <dbReference type="NCBI Taxonomy" id="29252"/>
    <lineage>
        <taxon>Viruses</taxon>
        <taxon>Duplodnaviria</taxon>
        <taxon>Heunggongvirae</taxon>
        <taxon>Uroviricota</taxon>
        <taxon>Caudoviricetes</taxon>
        <taxon>Peduoviridae</taxon>
        <taxon>Eganvirus</taxon>
    </lineage>
</organism>
<gene>
    <name type="primary">CP69</name>
</gene>
<proteinExistence type="predicted"/>
<name>CP69_BP186</name>
<keyword id="KW-1185">Reference proteome</keyword>
<reference key="1">
    <citation type="journal article" date="1986" name="J. Mol. Biol.">
        <title>Control of gene expression in the P2-related template coliphages. III. DNA sequence of the major control region of phage 186.</title>
        <authorList>
            <person name="Kalionis B."/>
            <person name="Dodd I.B."/>
            <person name="Egan J.B."/>
        </authorList>
    </citation>
    <scope>NUCLEOTIDE SEQUENCE [GENOMIC DNA]</scope>
    <source>
        <strain>186CITSP</strain>
    </source>
</reference>
<dbReference type="EMBL" id="U32222">
    <property type="protein sequence ID" value="AAC34174.1"/>
    <property type="molecule type" value="Genomic_DNA"/>
</dbReference>
<dbReference type="PIR" id="S09531">
    <property type="entry name" value="S09531"/>
</dbReference>
<dbReference type="RefSeq" id="NP_052277.1">
    <property type="nucleotide sequence ID" value="NC_001317.1"/>
</dbReference>
<dbReference type="KEGG" id="vg:1262447"/>
<dbReference type="Proteomes" id="UP000000369">
    <property type="component" value="Segment"/>
</dbReference>
<organismHost>
    <name type="scientific">Escherichia coli</name>
    <dbReference type="NCBI Taxonomy" id="562"/>
</organismHost>
<accession>P08685</accession>